<dbReference type="EMBL" id="U20939">
    <property type="protein sequence ID" value="AAB67508.1"/>
    <property type="molecule type" value="Genomic_DNA"/>
</dbReference>
<dbReference type="EMBL" id="BK006945">
    <property type="protein sequence ID" value="DAA09724.1"/>
    <property type="molecule type" value="Genomic_DNA"/>
</dbReference>
<dbReference type="PIR" id="S53409">
    <property type="entry name" value="S53409"/>
</dbReference>
<dbReference type="RefSeq" id="NP_013526.1">
    <property type="nucleotide sequence ID" value="NM_001182310.1"/>
</dbReference>
<dbReference type="BioGRID" id="31681">
    <property type="interactions" value="267"/>
</dbReference>
<dbReference type="DIP" id="DIP-6405N"/>
<dbReference type="FunCoup" id="Q06409">
    <property type="interactions" value="32"/>
</dbReference>
<dbReference type="IntAct" id="Q06409">
    <property type="interactions" value="4"/>
</dbReference>
<dbReference type="MINT" id="Q06409"/>
<dbReference type="STRING" id="4932.YLR422W"/>
<dbReference type="GlyGen" id="Q06409">
    <property type="glycosylation" value="1 site, 1 O-linked glycan (1 site)"/>
</dbReference>
<dbReference type="iPTMnet" id="Q06409"/>
<dbReference type="PaxDb" id="4932-YLR422W"/>
<dbReference type="PeptideAtlas" id="Q06409"/>
<dbReference type="EnsemblFungi" id="YLR422W_mRNA">
    <property type="protein sequence ID" value="YLR422W"/>
    <property type="gene ID" value="YLR422W"/>
</dbReference>
<dbReference type="GeneID" id="851141"/>
<dbReference type="KEGG" id="sce:YLR422W"/>
<dbReference type="AGR" id="SGD:S000004414"/>
<dbReference type="SGD" id="S000004414">
    <property type="gene designation" value="DCK1"/>
</dbReference>
<dbReference type="VEuPathDB" id="FungiDB:YLR422W"/>
<dbReference type="eggNOG" id="KOG1998">
    <property type="taxonomic scope" value="Eukaryota"/>
</dbReference>
<dbReference type="GeneTree" id="ENSGT00940000175868"/>
<dbReference type="HOGENOM" id="CLU_238900_0_0_1"/>
<dbReference type="InParanoid" id="Q06409"/>
<dbReference type="OMA" id="KPIFFDP"/>
<dbReference type="OrthoDB" id="18896at2759"/>
<dbReference type="BioCyc" id="YEAST:G3O-32482-MONOMER"/>
<dbReference type="Reactome" id="R-SCE-6798695">
    <property type="pathway name" value="Neutrophil degranulation"/>
</dbReference>
<dbReference type="Reactome" id="R-SCE-983231">
    <property type="pathway name" value="Factors involved in megakaryocyte development and platelet production"/>
</dbReference>
<dbReference type="BioGRID-ORCS" id="851141">
    <property type="hits" value="0 hits in 10 CRISPR screens"/>
</dbReference>
<dbReference type="PRO" id="PR:Q06409"/>
<dbReference type="Proteomes" id="UP000002311">
    <property type="component" value="Chromosome XII"/>
</dbReference>
<dbReference type="RNAct" id="Q06409">
    <property type="molecule type" value="protein"/>
</dbReference>
<dbReference type="GO" id="GO:0005737">
    <property type="term" value="C:cytoplasm"/>
    <property type="evidence" value="ECO:0007005"/>
    <property type="project" value="SGD"/>
</dbReference>
<dbReference type="GO" id="GO:0005739">
    <property type="term" value="C:mitochondrion"/>
    <property type="evidence" value="ECO:0000314"/>
    <property type="project" value="SGD"/>
</dbReference>
<dbReference type="GO" id="GO:0005886">
    <property type="term" value="C:plasma membrane"/>
    <property type="evidence" value="ECO:0000314"/>
    <property type="project" value="SGD"/>
</dbReference>
<dbReference type="GO" id="GO:0005085">
    <property type="term" value="F:guanyl-nucleotide exchange factor activity"/>
    <property type="evidence" value="ECO:0000318"/>
    <property type="project" value="GO_Central"/>
</dbReference>
<dbReference type="GO" id="GO:0031267">
    <property type="term" value="F:small GTPase binding"/>
    <property type="evidence" value="ECO:0000318"/>
    <property type="project" value="GO_Central"/>
</dbReference>
<dbReference type="GO" id="GO:0000422">
    <property type="term" value="P:autophagy of mitochondrion"/>
    <property type="evidence" value="ECO:0000315"/>
    <property type="project" value="SGD"/>
</dbReference>
<dbReference type="GO" id="GO:0035556">
    <property type="term" value="P:intracellular signal transduction"/>
    <property type="evidence" value="ECO:0000315"/>
    <property type="project" value="SGD"/>
</dbReference>
<dbReference type="GO" id="GO:0007264">
    <property type="term" value="P:small GTPase-mediated signal transduction"/>
    <property type="evidence" value="ECO:0007669"/>
    <property type="project" value="InterPro"/>
</dbReference>
<dbReference type="CDD" id="cd11684">
    <property type="entry name" value="DHR2_DOCK"/>
    <property type="match status" value="1"/>
</dbReference>
<dbReference type="Gene3D" id="1.20.58.740">
    <property type="match status" value="1"/>
</dbReference>
<dbReference type="Gene3D" id="1.25.40.410">
    <property type="match status" value="1"/>
</dbReference>
<dbReference type="InterPro" id="IPR026791">
    <property type="entry name" value="DOCK"/>
</dbReference>
<dbReference type="InterPro" id="IPR043161">
    <property type="entry name" value="DOCK_C_lobe_A"/>
</dbReference>
<dbReference type="InterPro" id="IPR043162">
    <property type="entry name" value="DOCK_C_lobe_C"/>
</dbReference>
<dbReference type="InterPro" id="IPR027357">
    <property type="entry name" value="DOCKER_dom"/>
</dbReference>
<dbReference type="InterPro" id="IPR046773">
    <property type="entry name" value="DOCKER_Lobe_C"/>
</dbReference>
<dbReference type="PANTHER" id="PTHR45653">
    <property type="entry name" value="DEDICATOR OF CYTOKINESIS"/>
    <property type="match status" value="1"/>
</dbReference>
<dbReference type="PANTHER" id="PTHR45653:SF10">
    <property type="entry name" value="MYOBLAST CITY, ISOFORM B"/>
    <property type="match status" value="1"/>
</dbReference>
<dbReference type="Pfam" id="PF25338">
    <property type="entry name" value="C2_DCK_4th"/>
    <property type="match status" value="1"/>
</dbReference>
<dbReference type="Pfam" id="PF20421">
    <property type="entry name" value="DHR-2_Lobe_C"/>
    <property type="match status" value="1"/>
</dbReference>
<dbReference type="PROSITE" id="PS51651">
    <property type="entry name" value="DOCKER"/>
    <property type="match status" value="1"/>
</dbReference>
<name>DCK1_YEAST</name>
<evidence type="ECO:0000255" key="1">
    <source>
        <dbReference type="PROSITE-ProRule" id="PRU00984"/>
    </source>
</evidence>
<evidence type="ECO:0000256" key="2">
    <source>
        <dbReference type="SAM" id="MobiDB-lite"/>
    </source>
</evidence>
<evidence type="ECO:0000269" key="3">
    <source>
    </source>
</evidence>
<evidence type="ECO:0000269" key="4">
    <source>
    </source>
</evidence>
<evidence type="ECO:0000269" key="5">
    <source>
    </source>
</evidence>
<evidence type="ECO:0000303" key="6">
    <source>
    </source>
</evidence>
<evidence type="ECO:0000305" key="7"/>
<feature type="chain" id="PRO_0000247776" description="DOCK-like protein 1">
    <location>
        <begin position="1"/>
        <end position="1932"/>
    </location>
</feature>
<feature type="domain" description="DOCKER" evidence="1">
    <location>
        <begin position="1410"/>
        <end position="1824"/>
    </location>
</feature>
<feature type="region of interest" description="Disordered" evidence="2">
    <location>
        <begin position="1908"/>
        <end position="1932"/>
    </location>
</feature>
<feature type="compositionally biased region" description="Polar residues" evidence="2">
    <location>
        <begin position="1908"/>
        <end position="1921"/>
    </location>
</feature>
<feature type="compositionally biased region" description="Basic and acidic residues" evidence="2">
    <location>
        <begin position="1922"/>
        <end position="1932"/>
    </location>
</feature>
<protein>
    <recommendedName>
        <fullName evidence="6">DOCK-like protein 1</fullName>
    </recommendedName>
</protein>
<organism>
    <name type="scientific">Saccharomyces cerevisiae (strain ATCC 204508 / S288c)</name>
    <name type="common">Baker's yeast</name>
    <dbReference type="NCBI Taxonomy" id="559292"/>
    <lineage>
        <taxon>Eukaryota</taxon>
        <taxon>Fungi</taxon>
        <taxon>Dikarya</taxon>
        <taxon>Ascomycota</taxon>
        <taxon>Saccharomycotina</taxon>
        <taxon>Saccharomycetes</taxon>
        <taxon>Saccharomycetales</taxon>
        <taxon>Saccharomycetaceae</taxon>
        <taxon>Saccharomyces</taxon>
    </lineage>
</organism>
<proteinExistence type="evidence at protein level"/>
<gene>
    <name evidence="6" type="primary">DCK1</name>
    <name type="ordered locus">YLR422W</name>
</gene>
<reference key="1">
    <citation type="journal article" date="1997" name="Nature">
        <title>The nucleotide sequence of Saccharomyces cerevisiae chromosome XII.</title>
        <authorList>
            <person name="Johnston M."/>
            <person name="Hillier L.W."/>
            <person name="Riles L."/>
            <person name="Albermann K."/>
            <person name="Andre B."/>
            <person name="Ansorge W."/>
            <person name="Benes V."/>
            <person name="Brueckner M."/>
            <person name="Delius H."/>
            <person name="Dubois E."/>
            <person name="Duesterhoeft A."/>
            <person name="Entian K.-D."/>
            <person name="Floeth M."/>
            <person name="Goffeau A."/>
            <person name="Hebling U."/>
            <person name="Heumann K."/>
            <person name="Heuss-Neitzel D."/>
            <person name="Hilbert H."/>
            <person name="Hilger F."/>
            <person name="Kleine K."/>
            <person name="Koetter P."/>
            <person name="Louis E.J."/>
            <person name="Messenguy F."/>
            <person name="Mewes H.-W."/>
            <person name="Miosga T."/>
            <person name="Moestl D."/>
            <person name="Mueller-Auer S."/>
            <person name="Nentwich U."/>
            <person name="Obermaier B."/>
            <person name="Piravandi E."/>
            <person name="Pohl T.M."/>
            <person name="Portetelle D."/>
            <person name="Purnelle B."/>
            <person name="Rechmann S."/>
            <person name="Rieger M."/>
            <person name="Rinke M."/>
            <person name="Rose M."/>
            <person name="Scharfe M."/>
            <person name="Scherens B."/>
            <person name="Scholler P."/>
            <person name="Schwager C."/>
            <person name="Schwarz S."/>
            <person name="Underwood A.P."/>
            <person name="Urrestarazu L.A."/>
            <person name="Vandenbol M."/>
            <person name="Verhasselt P."/>
            <person name="Vierendeels F."/>
            <person name="Voet M."/>
            <person name="Volckaert G."/>
            <person name="Voss H."/>
            <person name="Wambutt R."/>
            <person name="Wedler E."/>
            <person name="Wedler H."/>
            <person name="Zimmermann F.K."/>
            <person name="Zollner A."/>
            <person name="Hani J."/>
            <person name="Hoheisel J.D."/>
        </authorList>
    </citation>
    <scope>NUCLEOTIDE SEQUENCE [LARGE SCALE GENOMIC DNA]</scope>
    <source>
        <strain>ATCC 204508 / S288c</strain>
    </source>
</reference>
<reference key="2">
    <citation type="journal article" date="2014" name="G3 (Bethesda)">
        <title>The reference genome sequence of Saccharomyces cerevisiae: Then and now.</title>
        <authorList>
            <person name="Engel S.R."/>
            <person name="Dietrich F.S."/>
            <person name="Fisk D.G."/>
            <person name="Binkley G."/>
            <person name="Balakrishnan R."/>
            <person name="Costanzo M.C."/>
            <person name="Dwight S.S."/>
            <person name="Hitz B.C."/>
            <person name="Karra K."/>
            <person name="Nash R.S."/>
            <person name="Weng S."/>
            <person name="Wong E.D."/>
            <person name="Lloyd P."/>
            <person name="Skrzypek M.S."/>
            <person name="Miyasato S.R."/>
            <person name="Simison M."/>
            <person name="Cherry J.M."/>
        </authorList>
    </citation>
    <scope>GENOME REANNOTATION</scope>
    <source>
        <strain>ATCC 204508 / S288c</strain>
    </source>
</reference>
<reference key="3">
    <citation type="journal article" date="2003" name="Nature">
        <title>Global analysis of protein localization in budding yeast.</title>
        <authorList>
            <person name="Huh W.-K."/>
            <person name="Falvo J.V."/>
            <person name="Gerke L.C."/>
            <person name="Carroll A.S."/>
            <person name="Howson R.W."/>
            <person name="Weissman J.S."/>
            <person name="O'Shea E.K."/>
        </authorList>
    </citation>
    <scope>SUBCELLULAR LOCATION [LARGE SCALE ANALYSIS]</scope>
</reference>
<reference key="4">
    <citation type="journal article" date="2003" name="Nature">
        <title>Global analysis of protein expression in yeast.</title>
        <authorList>
            <person name="Ghaemmaghami S."/>
            <person name="Huh W.-K."/>
            <person name="Bower K."/>
            <person name="Howson R.W."/>
            <person name="Belle A."/>
            <person name="Dephoure N."/>
            <person name="O'Shea E.K."/>
            <person name="Weissman J.S."/>
        </authorList>
    </citation>
    <scope>LEVEL OF PROTEIN EXPRESSION [LARGE SCALE ANALYSIS]</scope>
</reference>
<reference key="5">
    <citation type="journal article" date="2015" name="Mol. Microbiol.">
        <title>Identification of Dck1 and Lmo1 as upstream regulators of the small GTPase Rho5 in Saccharomyces cerevisiae.</title>
        <authorList>
            <person name="Schmitz H.P."/>
            <person name="Jendretzki A."/>
            <person name="Wittland J."/>
            <person name="Wiechert J."/>
            <person name="Heinisch J.J."/>
        </authorList>
    </citation>
    <scope>INTERACTION WITH LMO1</scope>
    <scope>SUBCELLULAR LOCATION</scope>
    <scope>DISRUPTION PHENOTYPE</scope>
    <scope>FUNCTION</scope>
</reference>
<comment type="function">
    <text evidence="5">Forms a transiant heterodimeric complex with LMO1, that acts as a guanine nucleotide exchange factor exchange factor (GEF) for the small GTPase RHO5 (PubMed:25598154). DCK1, LMO1 and RHO5 relocate to mitochondria upon oxidative stress and trigger cell death (PubMed:25598154). The DCK1/LMO1/RHO5 signaling module mediates mitochondrial turnover under nitrogen starvation conditions via mitophagy (PubMed:25598154). The DCK1/LMO1/RHO5 signaling module plays also a function in cell wall integrity signaling (PubMed:25598154).</text>
</comment>
<comment type="subunit">
    <text evidence="5">Forms an active heterodimer with LMO1.</text>
</comment>
<comment type="interaction">
    <interactant intactId="EBI-35964">
        <id>Q06409</id>
    </interactant>
    <interactant intactId="EBI-29204">
        <id>P53857</id>
        <label>YNL234W</label>
    </interactant>
    <organismsDiffer>false</organismsDiffer>
    <experiments>2</experiments>
</comment>
<comment type="subcellular location">
    <subcellularLocation>
        <location evidence="3">Cytoplasm</location>
    </subcellularLocation>
    <subcellularLocation>
        <location evidence="5">Mitochondrion</location>
    </subcellularLocation>
    <text evidence="5">Quickly relocates to mitochondria under oxidative stress.</text>
</comment>
<comment type="disruption phenotype">
    <text evidence="5">Leads to hyper-resistance to cell wall stress agents such as calcofluor white and Congo red.</text>
</comment>
<comment type="miscellaneous">
    <text evidence="4">Present with 238 molecules/cell in log phase SD medium.</text>
</comment>
<comment type="similarity">
    <text evidence="7">Belongs to the DOCK family.</text>
</comment>
<accession>Q06409</accession>
<accession>D6VZ58</accession>
<keyword id="KW-0963">Cytoplasm</keyword>
<keyword id="KW-0496">Mitochondrion</keyword>
<keyword id="KW-1185">Reference proteome</keyword>
<sequence>MSQQDSQRWLPTDRLIYGVLVKSFLPLQRYPELVYENSNYANVYVGAEVYVFEESVDKKWCRAYQCLRPFPEEFISNMNSANDVLPDVKPKVVIFPRKYVHFEAEKAVSTMPFFKAPSAEDFKPLISKECESRSFCDSLYVSSTDDISTGKPRKTPRPPFPFFRYQKRSFKDEMGPILSLISSHVYSMYSIGEFSIYRKMIKLYYDLDTIRFRLSMNLTTEAEKINLIRAATSLRTKIAKFLSSTYRKNKLIANSTPRNPDPYGFEGIFARDIDTGELLSYEIDKLRTLVSSSMLCGLTNNFPTVPVVESDDESSSNGLFGTVRSSILVNLKDLAWDPSISDPKYQDLSICVYLRTKDEVLTESFTMTKSSNMESALDEIPAMLFKNILETIVHKNKVYLVVVLKETIAITTETAPEISSYNISTEESSSHSPFSPFNSSTENKIDHVKKGLAAGVINISPVFKFYNGLSVANKAQRFNLYLYSSDSSDSQNFNSSKDADLGWGGLINKIIKDSSEGVSVNPRAVSLSVTVKEIIGKQEAEKVLSTSLVPIRSIPTYFYDTMFSQAERIYLNLGRVSLYGLPAADTNIENVTVQISCRNKAVKFCKNKLEERSGDWKFVSVRPNESIGESIRIEGVENMNEDETLRVLVYLNGFLMAKSNIHIKKKNEIIEYRKGTVFQIMSSKSVPLIHLELEASYFGRRYNINPAITNFLVLQTKNVEFDQQLKEHYSVTLKQLNNVSFKDLLKHFDTILAHYLLLLESVNEATDKKGPSSSLPNIVFSEFVKFLNLMLTHQENSRYWFNRLYKKVMSKELECPNVAPILIKHMTTIFDRSHSSWTRTGTAICRTILYIIVLAIGSSHSDEMPNFSHFFRSLHKFLMLADEPIMADQILLIESIPSMLETMTNHCKVEDLVRFAIGLFECCQEKEMNQKMYSRPLSVREEEYLNTKFNCLLKLINKKVLQNYLTNTESVDKLRLQFLSKTLEWLLTPYTPGDDKCFHVESLRLVNSVFITIIEDYKFDMLQRNLIRLLPYLCKSFVHLRRYCKKARLMRPRRVFTMLFPREIPCNYIPVDSIVNDEVVVEVLLELAIIICEITKIASSRFPSYQSFSEIINLCDKDTLFQSNFYSRQITNENVYTITKTVFLFFKQDWFPGMKWLGVSALLGRSSLILLSLCKDYIIENNSPSPSKESEKRVDMRLWAEYVKVILLVSNHKSASLTKLAITPRKAVYLISGDLKKISAYILNECWDALATGHYNITYAKKYGLGALSDCQFELFVHNQFLIREIFIFAFHRHIDATRICCKILWGLGLNFWRIFGSLQPAVNACIPELFSAYQIGKLRLNDYELERFVSCLFFMMHVPDSDTFFPACMDFLRDLLGFLHIVNEIYKIPNQEEFDDDRTARHIEMFEYLLEANRPELFHKMIYDLFIHFIQKKDFVQAALSLELLAGTYAWDSNDTLEAISFPPLPEQSSFERKEYLLKESARNFSRGQKPEKALAVYKDLIKAYDEINYDLNGLAFVHDQIAGIYTRLQSIDRLVPTYFKVSFMGFGFPKSLRNKSFVFEGLPFEHITSMHDRLLRSYHGSNIVHSQEEVDMLLMNPPMGKYIHVASVEPCLSISDNYNSSDKKSSINNKVRMYIENRDLRTFSNSRRLPGAKGVTDLWVEEYTYHTMNTFPTLMNRSEIVKVTKSKLSPLENAIRSLQVKIQELYGLENMCNKTLKDHGDVNDLFTELSTNITGTISAPVNGGISQYKAFLEPSTSKQFSTDDLGRLTLAFDELVAVLGRCLTLHAELLPSKDLKPSHDLLVRLFEENFAEEIERYSRTLSEANRSRNNMITARIISHKNPNKKASFSGRDHHTSGSNHSQFVLEHSDSFGPNSLLFGKYLTRTLSHSSTTSSLDKSGIVSGTSSTFLAGSQPNTNTDSQHKHDYSHSG</sequence>